<organism>
    <name type="scientific">Prochlorococcus marinus (strain MIT 9303)</name>
    <dbReference type="NCBI Taxonomy" id="59922"/>
    <lineage>
        <taxon>Bacteria</taxon>
        <taxon>Bacillati</taxon>
        <taxon>Cyanobacteriota</taxon>
        <taxon>Cyanophyceae</taxon>
        <taxon>Synechococcales</taxon>
        <taxon>Prochlorococcaceae</taxon>
        <taxon>Prochlorococcus</taxon>
    </lineage>
</organism>
<evidence type="ECO:0000255" key="1">
    <source>
        <dbReference type="HAMAP-Rule" id="MF_00080"/>
    </source>
</evidence>
<proteinExistence type="inferred from homology"/>
<gene>
    <name evidence="1" type="primary">infC</name>
    <name type="ordered locus">P9303_01551</name>
</gene>
<name>IF3_PROM3</name>
<protein>
    <recommendedName>
        <fullName evidence="1">Translation initiation factor IF-3</fullName>
    </recommendedName>
</protein>
<keyword id="KW-0963">Cytoplasm</keyword>
<keyword id="KW-0396">Initiation factor</keyword>
<keyword id="KW-0648">Protein biosynthesis</keyword>
<sequence>MPPRPRFDRRAPVRELPNINDRINYPKLRVVDADGTQLGVINREEALDVAKDRELDLVLVSEKADPPVCRIMDYGKFKFEQEKKAKEAKKKSHQTEVKEVKMRYKIDQHDYNVRIGQAVRFLKAGDKVKCTVIFRGREIQHTALAETLLRRMAKDLEEQAEIQQAPKREGRNMIMFLTPRKTPLIKTDKENQIPTRAVRTITAPPRATTAAKTQLNKDQ</sequence>
<comment type="function">
    <text evidence="1">IF-3 binds to the 30S ribosomal subunit and shifts the equilibrium between 70S ribosomes and their 50S and 30S subunits in favor of the free subunits, thus enhancing the availability of 30S subunits on which protein synthesis initiation begins.</text>
</comment>
<comment type="subunit">
    <text evidence="1">Monomer.</text>
</comment>
<comment type="subcellular location">
    <subcellularLocation>
        <location evidence="1">Cytoplasm</location>
    </subcellularLocation>
</comment>
<comment type="similarity">
    <text evidence="1">Belongs to the IF-3 family.</text>
</comment>
<reference key="1">
    <citation type="journal article" date="2007" name="PLoS Genet.">
        <title>Patterns and implications of gene gain and loss in the evolution of Prochlorococcus.</title>
        <authorList>
            <person name="Kettler G.C."/>
            <person name="Martiny A.C."/>
            <person name="Huang K."/>
            <person name="Zucker J."/>
            <person name="Coleman M.L."/>
            <person name="Rodrigue S."/>
            <person name="Chen F."/>
            <person name="Lapidus A."/>
            <person name="Ferriera S."/>
            <person name="Johnson J."/>
            <person name="Steglich C."/>
            <person name="Church G.M."/>
            <person name="Richardson P."/>
            <person name="Chisholm S.W."/>
        </authorList>
    </citation>
    <scope>NUCLEOTIDE SEQUENCE [LARGE SCALE GENOMIC DNA]</scope>
    <source>
        <strain>MIT 9303</strain>
    </source>
</reference>
<feature type="chain" id="PRO_1000004554" description="Translation initiation factor IF-3">
    <location>
        <begin position="1"/>
        <end position="219"/>
    </location>
</feature>
<accession>A2C600</accession>
<dbReference type="EMBL" id="CP000554">
    <property type="protein sequence ID" value="ABM76910.1"/>
    <property type="molecule type" value="Genomic_DNA"/>
</dbReference>
<dbReference type="RefSeq" id="WP_011824841.1">
    <property type="nucleotide sequence ID" value="NC_008820.1"/>
</dbReference>
<dbReference type="SMR" id="A2C600"/>
<dbReference type="STRING" id="59922.P9303_01551"/>
<dbReference type="KEGG" id="pmf:P9303_01551"/>
<dbReference type="HOGENOM" id="CLU_054919_3_1_3"/>
<dbReference type="BioCyc" id="PMAR59922:G1G80-149-MONOMER"/>
<dbReference type="Proteomes" id="UP000002274">
    <property type="component" value="Chromosome"/>
</dbReference>
<dbReference type="GO" id="GO:0005829">
    <property type="term" value="C:cytosol"/>
    <property type="evidence" value="ECO:0007669"/>
    <property type="project" value="TreeGrafter"/>
</dbReference>
<dbReference type="GO" id="GO:0016020">
    <property type="term" value="C:membrane"/>
    <property type="evidence" value="ECO:0007669"/>
    <property type="project" value="TreeGrafter"/>
</dbReference>
<dbReference type="GO" id="GO:0043022">
    <property type="term" value="F:ribosome binding"/>
    <property type="evidence" value="ECO:0007669"/>
    <property type="project" value="TreeGrafter"/>
</dbReference>
<dbReference type="GO" id="GO:0003743">
    <property type="term" value="F:translation initiation factor activity"/>
    <property type="evidence" value="ECO:0007669"/>
    <property type="project" value="UniProtKB-UniRule"/>
</dbReference>
<dbReference type="GO" id="GO:0032790">
    <property type="term" value="P:ribosome disassembly"/>
    <property type="evidence" value="ECO:0007669"/>
    <property type="project" value="TreeGrafter"/>
</dbReference>
<dbReference type="FunFam" id="3.10.20.80:FF:000001">
    <property type="entry name" value="Translation initiation factor IF-3"/>
    <property type="match status" value="1"/>
</dbReference>
<dbReference type="FunFam" id="3.30.110.10:FF:000001">
    <property type="entry name" value="Translation initiation factor IF-3"/>
    <property type="match status" value="1"/>
</dbReference>
<dbReference type="Gene3D" id="3.30.110.10">
    <property type="entry name" value="Translation initiation factor 3 (IF-3), C-terminal domain"/>
    <property type="match status" value="1"/>
</dbReference>
<dbReference type="Gene3D" id="3.10.20.80">
    <property type="entry name" value="Translation initiation factor 3 (IF-3), N-terminal domain"/>
    <property type="match status" value="1"/>
</dbReference>
<dbReference type="HAMAP" id="MF_00080">
    <property type="entry name" value="IF_3"/>
    <property type="match status" value="1"/>
</dbReference>
<dbReference type="InterPro" id="IPR036788">
    <property type="entry name" value="T_IF-3_C_sf"/>
</dbReference>
<dbReference type="InterPro" id="IPR036787">
    <property type="entry name" value="T_IF-3_N_sf"/>
</dbReference>
<dbReference type="InterPro" id="IPR019813">
    <property type="entry name" value="Translation_initiation_fac3_CS"/>
</dbReference>
<dbReference type="InterPro" id="IPR001288">
    <property type="entry name" value="Translation_initiation_fac_3"/>
</dbReference>
<dbReference type="InterPro" id="IPR019815">
    <property type="entry name" value="Translation_initiation_fac_3_C"/>
</dbReference>
<dbReference type="InterPro" id="IPR019814">
    <property type="entry name" value="Translation_initiation_fac_3_N"/>
</dbReference>
<dbReference type="NCBIfam" id="TIGR00168">
    <property type="entry name" value="infC"/>
    <property type="match status" value="1"/>
</dbReference>
<dbReference type="PANTHER" id="PTHR10938">
    <property type="entry name" value="TRANSLATION INITIATION FACTOR IF-3"/>
    <property type="match status" value="1"/>
</dbReference>
<dbReference type="PANTHER" id="PTHR10938:SF0">
    <property type="entry name" value="TRANSLATION INITIATION FACTOR IF-3, MITOCHONDRIAL"/>
    <property type="match status" value="1"/>
</dbReference>
<dbReference type="Pfam" id="PF00707">
    <property type="entry name" value="IF3_C"/>
    <property type="match status" value="1"/>
</dbReference>
<dbReference type="Pfam" id="PF05198">
    <property type="entry name" value="IF3_N"/>
    <property type="match status" value="1"/>
</dbReference>
<dbReference type="SUPFAM" id="SSF55200">
    <property type="entry name" value="Translation initiation factor IF3, C-terminal domain"/>
    <property type="match status" value="1"/>
</dbReference>
<dbReference type="SUPFAM" id="SSF54364">
    <property type="entry name" value="Translation initiation factor IF3, N-terminal domain"/>
    <property type="match status" value="1"/>
</dbReference>
<dbReference type="PROSITE" id="PS00938">
    <property type="entry name" value="IF3"/>
    <property type="match status" value="1"/>
</dbReference>